<organism>
    <name type="scientific">Bifidobacterium animalis subsp. lactis (strain AD011)</name>
    <dbReference type="NCBI Taxonomy" id="442563"/>
    <lineage>
        <taxon>Bacteria</taxon>
        <taxon>Bacillati</taxon>
        <taxon>Actinomycetota</taxon>
        <taxon>Actinomycetes</taxon>
        <taxon>Bifidobacteriales</taxon>
        <taxon>Bifidobacteriaceae</taxon>
        <taxon>Bifidobacterium</taxon>
    </lineage>
</organism>
<keyword id="KW-1185">Reference proteome</keyword>
<keyword id="KW-0687">Ribonucleoprotein</keyword>
<keyword id="KW-0689">Ribosomal protein</keyword>
<keyword id="KW-0694">RNA-binding</keyword>
<keyword id="KW-0699">rRNA-binding</keyword>
<gene>
    <name evidence="1" type="primary">rpsE</name>
    <name type="ordered locus">BLA_0379</name>
</gene>
<feature type="chain" id="PRO_1000165442" description="Small ribosomal subunit protein uS5">
    <location>
        <begin position="1"/>
        <end position="243"/>
    </location>
</feature>
<feature type="domain" description="S5 DRBM" evidence="1">
    <location>
        <begin position="57"/>
        <end position="120"/>
    </location>
</feature>
<feature type="region of interest" description="Disordered" evidence="2">
    <location>
        <begin position="1"/>
        <end position="54"/>
    </location>
</feature>
<feature type="compositionally biased region" description="Polar residues" evidence="2">
    <location>
        <begin position="11"/>
        <end position="24"/>
    </location>
</feature>
<feature type="compositionally biased region" description="Basic and acidic residues" evidence="2">
    <location>
        <begin position="26"/>
        <end position="54"/>
    </location>
</feature>
<evidence type="ECO:0000255" key="1">
    <source>
        <dbReference type="HAMAP-Rule" id="MF_01307"/>
    </source>
</evidence>
<evidence type="ECO:0000256" key="2">
    <source>
        <dbReference type="SAM" id="MobiDB-lite"/>
    </source>
</evidence>
<evidence type="ECO:0000305" key="3"/>
<name>RS5_BIFA0</name>
<reference key="1">
    <citation type="journal article" date="2009" name="J. Bacteriol.">
        <title>Genome sequence of the probiotic bacterium Bifidobacterium animalis subsp. lactis AD011.</title>
        <authorList>
            <person name="Kim J.F."/>
            <person name="Jeong H."/>
            <person name="Yu D.S."/>
            <person name="Choi S.-H."/>
            <person name="Hur C.-G."/>
            <person name="Park M.-S."/>
            <person name="Yoon S.H."/>
            <person name="Kim D.-W."/>
            <person name="Ji G.E."/>
            <person name="Park H.-S."/>
            <person name="Oh T.K."/>
        </authorList>
    </citation>
    <scope>NUCLEOTIDE SEQUENCE [LARGE SCALE GENOMIC DNA]</scope>
    <source>
        <strain>AD011</strain>
    </source>
</reference>
<comment type="function">
    <text evidence="1">With S4 and S12 plays an important role in translational accuracy.</text>
</comment>
<comment type="function">
    <text evidence="1">Located at the back of the 30S subunit body where it stabilizes the conformation of the head with respect to the body.</text>
</comment>
<comment type="subunit">
    <text evidence="1">Part of the 30S ribosomal subunit. Contacts proteins S4 and S8.</text>
</comment>
<comment type="domain">
    <text>The N-terminal domain interacts with the head of the 30S subunit; the C-terminal domain interacts with the body and contacts protein S4. The interaction surface between S4 and S5 is involved in control of translational fidelity.</text>
</comment>
<comment type="similarity">
    <text evidence="1">Belongs to the universal ribosomal protein uS5 family.</text>
</comment>
<proteinExistence type="inferred from homology"/>
<dbReference type="EMBL" id="CP001213">
    <property type="protein sequence ID" value="ACL28681.1"/>
    <property type="molecule type" value="Genomic_DNA"/>
</dbReference>
<dbReference type="RefSeq" id="WP_014482661.1">
    <property type="nucleotide sequence ID" value="NC_011835.1"/>
</dbReference>
<dbReference type="SMR" id="B8DW30"/>
<dbReference type="STRING" id="442563.BLA_0379"/>
<dbReference type="GeneID" id="29695991"/>
<dbReference type="KEGG" id="bla:BLA_0379"/>
<dbReference type="HOGENOM" id="CLU_065898_1_1_11"/>
<dbReference type="Proteomes" id="UP000002456">
    <property type="component" value="Chromosome"/>
</dbReference>
<dbReference type="GO" id="GO:0015935">
    <property type="term" value="C:small ribosomal subunit"/>
    <property type="evidence" value="ECO:0007669"/>
    <property type="project" value="InterPro"/>
</dbReference>
<dbReference type="GO" id="GO:0019843">
    <property type="term" value="F:rRNA binding"/>
    <property type="evidence" value="ECO:0007669"/>
    <property type="project" value="UniProtKB-UniRule"/>
</dbReference>
<dbReference type="GO" id="GO:0003735">
    <property type="term" value="F:structural constituent of ribosome"/>
    <property type="evidence" value="ECO:0007669"/>
    <property type="project" value="InterPro"/>
</dbReference>
<dbReference type="GO" id="GO:0006412">
    <property type="term" value="P:translation"/>
    <property type="evidence" value="ECO:0007669"/>
    <property type="project" value="UniProtKB-UniRule"/>
</dbReference>
<dbReference type="FunFam" id="3.30.160.20:FF:000001">
    <property type="entry name" value="30S ribosomal protein S5"/>
    <property type="match status" value="1"/>
</dbReference>
<dbReference type="FunFam" id="3.30.230.10:FF:000002">
    <property type="entry name" value="30S ribosomal protein S5"/>
    <property type="match status" value="1"/>
</dbReference>
<dbReference type="Gene3D" id="3.30.160.20">
    <property type="match status" value="1"/>
</dbReference>
<dbReference type="Gene3D" id="3.30.230.10">
    <property type="match status" value="1"/>
</dbReference>
<dbReference type="HAMAP" id="MF_01307_B">
    <property type="entry name" value="Ribosomal_uS5_B"/>
    <property type="match status" value="1"/>
</dbReference>
<dbReference type="InterPro" id="IPR020568">
    <property type="entry name" value="Ribosomal_Su5_D2-typ_SF"/>
</dbReference>
<dbReference type="InterPro" id="IPR000851">
    <property type="entry name" value="Ribosomal_uS5"/>
</dbReference>
<dbReference type="InterPro" id="IPR005712">
    <property type="entry name" value="Ribosomal_uS5_bac-type"/>
</dbReference>
<dbReference type="InterPro" id="IPR005324">
    <property type="entry name" value="Ribosomal_uS5_C"/>
</dbReference>
<dbReference type="InterPro" id="IPR013810">
    <property type="entry name" value="Ribosomal_uS5_N"/>
</dbReference>
<dbReference type="InterPro" id="IPR018192">
    <property type="entry name" value="Ribosomal_uS5_N_CS"/>
</dbReference>
<dbReference type="InterPro" id="IPR014721">
    <property type="entry name" value="Ribsml_uS5_D2-typ_fold_subgr"/>
</dbReference>
<dbReference type="NCBIfam" id="TIGR01021">
    <property type="entry name" value="rpsE_bact"/>
    <property type="match status" value="1"/>
</dbReference>
<dbReference type="PANTHER" id="PTHR48277">
    <property type="entry name" value="MITOCHONDRIAL RIBOSOMAL PROTEIN S5"/>
    <property type="match status" value="1"/>
</dbReference>
<dbReference type="PANTHER" id="PTHR48277:SF1">
    <property type="entry name" value="MITOCHONDRIAL RIBOSOMAL PROTEIN S5"/>
    <property type="match status" value="1"/>
</dbReference>
<dbReference type="Pfam" id="PF00333">
    <property type="entry name" value="Ribosomal_S5"/>
    <property type="match status" value="1"/>
</dbReference>
<dbReference type="Pfam" id="PF03719">
    <property type="entry name" value="Ribosomal_S5_C"/>
    <property type="match status" value="1"/>
</dbReference>
<dbReference type="SUPFAM" id="SSF54768">
    <property type="entry name" value="dsRNA-binding domain-like"/>
    <property type="match status" value="1"/>
</dbReference>
<dbReference type="SUPFAM" id="SSF54211">
    <property type="entry name" value="Ribosomal protein S5 domain 2-like"/>
    <property type="match status" value="1"/>
</dbReference>
<dbReference type="PROSITE" id="PS00585">
    <property type="entry name" value="RIBOSOMAL_S5"/>
    <property type="match status" value="1"/>
</dbReference>
<dbReference type="PROSITE" id="PS50881">
    <property type="entry name" value="S5_DSRBD"/>
    <property type="match status" value="1"/>
</dbReference>
<sequence>MSDNEKETQVAEETQNTQATAESSNNDERRGRRNNRGGEGRRGDRRGRREDNHENEMLDRVVTINRVSKTHKGGRTFSFAALVVVGDGNGTVGVGYGKSREVPAAIAKGQLDAKKHLFNVPRIRGTVTHPVTGHDHAGTVMLRPAAPGTGVIAGSAVRAVMECAGITDILTKSMGSATAVNVVRATVDALKQLEEPEEIAARRGLSVQEVAPDQLLRERAAGIAEARKAREEAKAEAAAKDGE</sequence>
<accession>B8DW30</accession>
<protein>
    <recommendedName>
        <fullName evidence="1">Small ribosomal subunit protein uS5</fullName>
    </recommendedName>
    <alternativeName>
        <fullName evidence="3">30S ribosomal protein S5</fullName>
    </alternativeName>
</protein>